<sequence>MAAKIVSVLFLISLLIFASFESSHGSQIVIYWGQNGDEGSLADTCNSGNYGTVILAFVATFGNGQTPALNLAGHCDPATNCNSLSSDIKTCQQAGIKVLLSIGGGAGGYSLSSTDDANTFADYLWNTYLGGQSSTRPLGDAVLDGIDFDIESGDGRFWDDLARALAGHNNGQKTVYLSAAPQCPLPDASLSTAIATGLFDYVWVQFYNNPPCQYDTSADNLLSSWNQWTTVQANQIFLGLPASTDAAGSGFIPADALTSQVLPTIKGSAKYGGVMLWSKAYDSGYSSAIKSSV</sequence>
<dbReference type="EC" id="3.2.1.14"/>
<dbReference type="EMBL" id="S66038">
    <property type="protein sequence ID" value="AAB28479.1"/>
    <property type="molecule type" value="mRNA"/>
</dbReference>
<dbReference type="SMR" id="P36910"/>
<dbReference type="CAZy" id="GH18">
    <property type="family name" value="Glycoside Hydrolase Family 18"/>
</dbReference>
<dbReference type="GO" id="GO:0005576">
    <property type="term" value="C:extracellular region"/>
    <property type="evidence" value="ECO:0007669"/>
    <property type="project" value="UniProtKB-SubCell"/>
</dbReference>
<dbReference type="GO" id="GO:0008843">
    <property type="term" value="F:endochitinase activity"/>
    <property type="evidence" value="ECO:0007669"/>
    <property type="project" value="UniProtKB-EC"/>
</dbReference>
<dbReference type="GO" id="GO:0006032">
    <property type="term" value="P:chitin catabolic process"/>
    <property type="evidence" value="ECO:0007669"/>
    <property type="project" value="UniProtKB-KW"/>
</dbReference>
<dbReference type="GO" id="GO:0000272">
    <property type="term" value="P:polysaccharide catabolic process"/>
    <property type="evidence" value="ECO:0007669"/>
    <property type="project" value="UniProtKB-KW"/>
</dbReference>
<dbReference type="CDD" id="cd02877">
    <property type="entry name" value="GH18_hevamine_XipI_class_III"/>
    <property type="match status" value="1"/>
</dbReference>
<dbReference type="FunFam" id="3.20.20.80:FF:000015">
    <property type="entry name" value="Acidic endochitinase SE2"/>
    <property type="match status" value="1"/>
</dbReference>
<dbReference type="Gene3D" id="3.20.20.80">
    <property type="entry name" value="Glycosidases"/>
    <property type="match status" value="1"/>
</dbReference>
<dbReference type="InterPro" id="IPR045321">
    <property type="entry name" value="Cts1-like"/>
</dbReference>
<dbReference type="InterPro" id="IPR001223">
    <property type="entry name" value="Glyco_hydro18_cat"/>
</dbReference>
<dbReference type="InterPro" id="IPR001579">
    <property type="entry name" value="Glyco_hydro_18_chit_AS"/>
</dbReference>
<dbReference type="InterPro" id="IPR017853">
    <property type="entry name" value="Glycoside_hydrolase_SF"/>
</dbReference>
<dbReference type="InterPro" id="IPR050542">
    <property type="entry name" value="Glycosyl_Hydrlase18_Chitinase"/>
</dbReference>
<dbReference type="PANTHER" id="PTHR45708:SF22">
    <property type="entry name" value="ACIDIC ENDOCHITINASE"/>
    <property type="match status" value="1"/>
</dbReference>
<dbReference type="PANTHER" id="PTHR45708">
    <property type="entry name" value="ENDOCHITINASE"/>
    <property type="match status" value="1"/>
</dbReference>
<dbReference type="Pfam" id="PF00704">
    <property type="entry name" value="Glyco_hydro_18"/>
    <property type="match status" value="1"/>
</dbReference>
<dbReference type="SUPFAM" id="SSF51445">
    <property type="entry name" value="(Trans)glycosidases"/>
    <property type="match status" value="1"/>
</dbReference>
<dbReference type="PROSITE" id="PS01095">
    <property type="entry name" value="GH18_1"/>
    <property type="match status" value="1"/>
</dbReference>
<dbReference type="PROSITE" id="PS51910">
    <property type="entry name" value="GH18_2"/>
    <property type="match status" value="1"/>
</dbReference>
<comment type="function">
    <text>This protein functions as a defense against chitin containing fungal pathogens. This endochitinase also exhibits exochitinase activity, i.e. it is capable of hydrolyzing chito-oligosaccharides, including chitobiose.</text>
</comment>
<comment type="catalytic activity">
    <reaction>
        <text>Random endo-hydrolysis of N-acetyl-beta-D-glucosaminide (1-&gt;4)-beta-linkages in chitin and chitodextrins.</text>
        <dbReference type="EC" id="3.2.1.14"/>
    </reaction>
</comment>
<comment type="subcellular location">
    <subcellularLocation>
        <location>Secreted</location>
        <location>Extracellular space</location>
    </subcellularLocation>
    <text>Intercellular fluid of leaves.</text>
</comment>
<comment type="tissue specificity">
    <text>Accumulates in leaves during infection.</text>
</comment>
<comment type="induction">
    <text>By fungal infection.</text>
</comment>
<comment type="similarity">
    <text evidence="3">Belongs to the glycosyl hydrolase 18 family. Chitinase class II subfamily.</text>
</comment>
<feature type="signal peptide">
    <location>
        <begin position="1"/>
        <end position="25"/>
    </location>
</feature>
<feature type="chain" id="PRO_0000011914" description="Acidic endochitinase SE2">
    <location>
        <begin position="26"/>
        <end position="293"/>
    </location>
</feature>
<feature type="domain" description="GH18" evidence="2">
    <location>
        <begin position="26"/>
        <end position="293"/>
    </location>
</feature>
<feature type="active site" description="Proton donor" evidence="2">
    <location>
        <position position="151"/>
    </location>
</feature>
<feature type="disulfide bond" evidence="1">
    <location>
        <begin position="45"/>
        <end position="91"/>
    </location>
</feature>
<feature type="disulfide bond" evidence="1">
    <location>
        <begin position="75"/>
        <end position="81"/>
    </location>
</feature>
<feature type="disulfide bond" evidence="1">
    <location>
        <begin position="183"/>
        <end position="212"/>
    </location>
</feature>
<accession>P36910</accession>
<evidence type="ECO:0000250" key="1"/>
<evidence type="ECO:0000255" key="2">
    <source>
        <dbReference type="PROSITE-ProRule" id="PRU01258"/>
    </source>
</evidence>
<evidence type="ECO:0000305" key="3"/>
<name>CHIE_BETVU</name>
<organism>
    <name type="scientific">Beta vulgaris</name>
    <name type="common">Sugar beet</name>
    <dbReference type="NCBI Taxonomy" id="161934"/>
    <lineage>
        <taxon>Eukaryota</taxon>
        <taxon>Viridiplantae</taxon>
        <taxon>Streptophyta</taxon>
        <taxon>Embryophyta</taxon>
        <taxon>Tracheophyta</taxon>
        <taxon>Spermatophyta</taxon>
        <taxon>Magnoliopsida</taxon>
        <taxon>eudicotyledons</taxon>
        <taxon>Gunneridae</taxon>
        <taxon>Pentapetalae</taxon>
        <taxon>Caryophyllales</taxon>
        <taxon>Chenopodiaceae</taxon>
        <taxon>Betoideae</taxon>
        <taxon>Beta</taxon>
    </lineage>
</organism>
<protein>
    <recommendedName>
        <fullName>Acidic endochitinase SE2</fullName>
        <ecNumber>3.2.1.14</ecNumber>
    </recommendedName>
</protein>
<reference key="1">
    <citation type="journal article" date="1993" name="Mol. Plant Microbe Interact.">
        <title>An acidic class III chitinase in sugar beet: induction by Cercospora beticola, characterization, and expression in transgenic tobacco plants.</title>
        <authorList>
            <person name="Nielsen K.K."/>
            <person name="Mikkelsen J.D."/>
            <person name="Kragh K.M."/>
            <person name="Bojsen K."/>
        </authorList>
    </citation>
    <scope>NUCLEOTIDE SEQUENCE [MRNA]</scope>
    <scope>PARTIAL PROTEIN SEQUENCE</scope>
    <source>
        <strain>cv. Monova</strain>
        <tissue>Leaf</tissue>
    </source>
</reference>
<proteinExistence type="evidence at protein level"/>
<keyword id="KW-0119">Carbohydrate metabolism</keyword>
<keyword id="KW-0146">Chitin degradation</keyword>
<keyword id="KW-0903">Direct protein sequencing</keyword>
<keyword id="KW-1015">Disulfide bond</keyword>
<keyword id="KW-0326">Glycosidase</keyword>
<keyword id="KW-0378">Hydrolase</keyword>
<keyword id="KW-0624">Polysaccharide degradation</keyword>
<keyword id="KW-0964">Secreted</keyword>
<keyword id="KW-0732">Signal</keyword>
<gene>
    <name type="primary">SE2</name>
</gene>